<comment type="function">
    <text evidence="1">Involved in the de novo purine biosynthesis. Catalyzes the transfer of formate to 5-phospho-ribosyl-glycinamide (GAR), producing 5-phospho-ribosyl-N-formylglycinamide (FGAR). Formate is provided by PurU via hydrolysis of 10-formyl-tetrahydrofolate.</text>
</comment>
<comment type="catalytic activity">
    <reaction evidence="1">
        <text>N(1)-(5-phospho-beta-D-ribosyl)glycinamide + formate + ATP = N(2)-formyl-N(1)-(5-phospho-beta-D-ribosyl)glycinamide + ADP + phosphate + H(+)</text>
        <dbReference type="Rhea" id="RHEA:24829"/>
        <dbReference type="ChEBI" id="CHEBI:15378"/>
        <dbReference type="ChEBI" id="CHEBI:15740"/>
        <dbReference type="ChEBI" id="CHEBI:30616"/>
        <dbReference type="ChEBI" id="CHEBI:43474"/>
        <dbReference type="ChEBI" id="CHEBI:143788"/>
        <dbReference type="ChEBI" id="CHEBI:147286"/>
        <dbReference type="ChEBI" id="CHEBI:456216"/>
        <dbReference type="EC" id="6.3.1.21"/>
    </reaction>
    <physiologicalReaction direction="left-to-right" evidence="1">
        <dbReference type="Rhea" id="RHEA:24830"/>
    </physiologicalReaction>
</comment>
<comment type="pathway">
    <text evidence="1">Purine metabolism; IMP biosynthesis via de novo pathway; N(2)-formyl-N(1)-(5-phospho-D-ribosyl)glycinamide from N(1)-(5-phospho-D-ribosyl)glycinamide (formate route): step 1/1.</text>
</comment>
<comment type="subunit">
    <text evidence="1">Homodimer.</text>
</comment>
<comment type="similarity">
    <text evidence="1">Belongs to the PurK/PurT family.</text>
</comment>
<accession>A3NT04</accession>
<dbReference type="EC" id="6.3.1.21" evidence="1"/>
<dbReference type="EMBL" id="CP000572">
    <property type="protein sequence ID" value="ABN89214.1"/>
    <property type="molecule type" value="Genomic_DNA"/>
</dbReference>
<dbReference type="RefSeq" id="WP_004522466.1">
    <property type="nucleotide sequence ID" value="NC_009076.1"/>
</dbReference>
<dbReference type="SMR" id="A3NT04"/>
<dbReference type="GeneID" id="93059610"/>
<dbReference type="KEGG" id="bpl:BURPS1106A_1196"/>
<dbReference type="HOGENOM" id="CLU_011534_1_3_4"/>
<dbReference type="UniPathway" id="UPA00074">
    <property type="reaction ID" value="UER00127"/>
</dbReference>
<dbReference type="Proteomes" id="UP000006738">
    <property type="component" value="Chromosome I"/>
</dbReference>
<dbReference type="GO" id="GO:0005829">
    <property type="term" value="C:cytosol"/>
    <property type="evidence" value="ECO:0007669"/>
    <property type="project" value="TreeGrafter"/>
</dbReference>
<dbReference type="GO" id="GO:0005524">
    <property type="term" value="F:ATP binding"/>
    <property type="evidence" value="ECO:0007669"/>
    <property type="project" value="UniProtKB-UniRule"/>
</dbReference>
<dbReference type="GO" id="GO:0000287">
    <property type="term" value="F:magnesium ion binding"/>
    <property type="evidence" value="ECO:0007669"/>
    <property type="project" value="InterPro"/>
</dbReference>
<dbReference type="GO" id="GO:0043815">
    <property type="term" value="F:phosphoribosylglycinamide formyltransferase 2 activity"/>
    <property type="evidence" value="ECO:0007669"/>
    <property type="project" value="UniProtKB-UniRule"/>
</dbReference>
<dbReference type="GO" id="GO:0004644">
    <property type="term" value="F:phosphoribosylglycinamide formyltransferase activity"/>
    <property type="evidence" value="ECO:0007669"/>
    <property type="project" value="InterPro"/>
</dbReference>
<dbReference type="GO" id="GO:0006189">
    <property type="term" value="P:'de novo' IMP biosynthetic process"/>
    <property type="evidence" value="ECO:0007669"/>
    <property type="project" value="UniProtKB-UniRule"/>
</dbReference>
<dbReference type="FunFam" id="3.30.1490.20:FF:000013">
    <property type="entry name" value="Formate-dependent phosphoribosylglycinamide formyltransferase"/>
    <property type="match status" value="1"/>
</dbReference>
<dbReference type="FunFam" id="3.40.50.20:FF:000007">
    <property type="entry name" value="Formate-dependent phosphoribosylglycinamide formyltransferase"/>
    <property type="match status" value="1"/>
</dbReference>
<dbReference type="Gene3D" id="3.40.50.20">
    <property type="match status" value="1"/>
</dbReference>
<dbReference type="Gene3D" id="3.30.1490.20">
    <property type="entry name" value="ATP-grasp fold, A domain"/>
    <property type="match status" value="1"/>
</dbReference>
<dbReference type="Gene3D" id="3.30.470.20">
    <property type="entry name" value="ATP-grasp fold, B domain"/>
    <property type="match status" value="1"/>
</dbReference>
<dbReference type="HAMAP" id="MF_01643">
    <property type="entry name" value="PurT"/>
    <property type="match status" value="1"/>
</dbReference>
<dbReference type="InterPro" id="IPR011761">
    <property type="entry name" value="ATP-grasp"/>
</dbReference>
<dbReference type="InterPro" id="IPR003135">
    <property type="entry name" value="ATP-grasp_carboxylate-amine"/>
</dbReference>
<dbReference type="InterPro" id="IPR013815">
    <property type="entry name" value="ATP_grasp_subdomain_1"/>
</dbReference>
<dbReference type="InterPro" id="IPR016185">
    <property type="entry name" value="PreATP-grasp_dom_sf"/>
</dbReference>
<dbReference type="InterPro" id="IPR005862">
    <property type="entry name" value="PurT"/>
</dbReference>
<dbReference type="InterPro" id="IPR054350">
    <property type="entry name" value="PurT/PurK_preATP-grasp"/>
</dbReference>
<dbReference type="InterPro" id="IPR048740">
    <property type="entry name" value="PurT_C"/>
</dbReference>
<dbReference type="InterPro" id="IPR011054">
    <property type="entry name" value="Rudment_hybrid_motif"/>
</dbReference>
<dbReference type="NCBIfam" id="NF006766">
    <property type="entry name" value="PRK09288.1"/>
    <property type="match status" value="1"/>
</dbReference>
<dbReference type="NCBIfam" id="TIGR01142">
    <property type="entry name" value="purT"/>
    <property type="match status" value="1"/>
</dbReference>
<dbReference type="PANTHER" id="PTHR43055">
    <property type="entry name" value="FORMATE-DEPENDENT PHOSPHORIBOSYLGLYCINAMIDE FORMYLTRANSFERASE"/>
    <property type="match status" value="1"/>
</dbReference>
<dbReference type="PANTHER" id="PTHR43055:SF1">
    <property type="entry name" value="FORMATE-DEPENDENT PHOSPHORIBOSYLGLYCINAMIDE FORMYLTRANSFERASE"/>
    <property type="match status" value="1"/>
</dbReference>
<dbReference type="Pfam" id="PF02222">
    <property type="entry name" value="ATP-grasp"/>
    <property type="match status" value="1"/>
</dbReference>
<dbReference type="Pfam" id="PF21244">
    <property type="entry name" value="PurT_C"/>
    <property type="match status" value="1"/>
</dbReference>
<dbReference type="Pfam" id="PF22660">
    <property type="entry name" value="RS_preATP-grasp-like"/>
    <property type="match status" value="1"/>
</dbReference>
<dbReference type="SUPFAM" id="SSF56059">
    <property type="entry name" value="Glutathione synthetase ATP-binding domain-like"/>
    <property type="match status" value="1"/>
</dbReference>
<dbReference type="SUPFAM" id="SSF52440">
    <property type="entry name" value="PreATP-grasp domain"/>
    <property type="match status" value="1"/>
</dbReference>
<dbReference type="SUPFAM" id="SSF51246">
    <property type="entry name" value="Rudiment single hybrid motif"/>
    <property type="match status" value="1"/>
</dbReference>
<dbReference type="PROSITE" id="PS50975">
    <property type="entry name" value="ATP_GRASP"/>
    <property type="match status" value="1"/>
</dbReference>
<keyword id="KW-0067">ATP-binding</keyword>
<keyword id="KW-0436">Ligase</keyword>
<keyword id="KW-0460">Magnesium</keyword>
<keyword id="KW-0479">Metal-binding</keyword>
<keyword id="KW-0547">Nucleotide-binding</keyword>
<keyword id="KW-0658">Purine biosynthesis</keyword>
<gene>
    <name evidence="1" type="primary">purT</name>
    <name type="ordered locus">BURPS1106A_1196</name>
</gene>
<feature type="chain" id="PRO_0000319142" description="Formate-dependent phosphoribosylglycinamide formyltransferase">
    <location>
        <begin position="1"/>
        <end position="404"/>
    </location>
</feature>
<feature type="domain" description="ATP-grasp" evidence="1">
    <location>
        <begin position="123"/>
        <end position="318"/>
    </location>
</feature>
<feature type="binding site" evidence="1">
    <location>
        <begin position="25"/>
        <end position="26"/>
    </location>
    <ligand>
        <name>N(1)-(5-phospho-beta-D-ribosyl)glycinamide</name>
        <dbReference type="ChEBI" id="CHEBI:143788"/>
    </ligand>
</feature>
<feature type="binding site" evidence="1">
    <location>
        <position position="85"/>
    </location>
    <ligand>
        <name>N(1)-(5-phospho-beta-D-ribosyl)glycinamide</name>
        <dbReference type="ChEBI" id="CHEBI:143788"/>
    </ligand>
</feature>
<feature type="binding site" evidence="1">
    <location>
        <position position="118"/>
    </location>
    <ligand>
        <name>ATP</name>
        <dbReference type="ChEBI" id="CHEBI:30616"/>
    </ligand>
</feature>
<feature type="binding site" evidence="1">
    <location>
        <position position="159"/>
    </location>
    <ligand>
        <name>ATP</name>
        <dbReference type="ChEBI" id="CHEBI:30616"/>
    </ligand>
</feature>
<feature type="binding site" evidence="1">
    <location>
        <begin position="164"/>
        <end position="169"/>
    </location>
    <ligand>
        <name>ATP</name>
        <dbReference type="ChEBI" id="CHEBI:30616"/>
    </ligand>
</feature>
<feature type="binding site" evidence="1">
    <location>
        <begin position="199"/>
        <end position="202"/>
    </location>
    <ligand>
        <name>ATP</name>
        <dbReference type="ChEBI" id="CHEBI:30616"/>
    </ligand>
</feature>
<feature type="binding site" evidence="1">
    <location>
        <position position="207"/>
    </location>
    <ligand>
        <name>ATP</name>
        <dbReference type="ChEBI" id="CHEBI:30616"/>
    </ligand>
</feature>
<feature type="binding site" evidence="1">
    <location>
        <position position="277"/>
    </location>
    <ligand>
        <name>Mg(2+)</name>
        <dbReference type="ChEBI" id="CHEBI:18420"/>
    </ligand>
</feature>
<feature type="binding site" evidence="1">
    <location>
        <position position="289"/>
    </location>
    <ligand>
        <name>Mg(2+)</name>
        <dbReference type="ChEBI" id="CHEBI:18420"/>
    </ligand>
</feature>
<feature type="binding site" evidence="1">
    <location>
        <position position="296"/>
    </location>
    <ligand>
        <name>N(1)-(5-phospho-beta-D-ribosyl)glycinamide</name>
        <dbReference type="ChEBI" id="CHEBI:143788"/>
    </ligand>
</feature>
<feature type="binding site" evidence="1">
    <location>
        <position position="365"/>
    </location>
    <ligand>
        <name>N(1)-(5-phospho-beta-D-ribosyl)glycinamide</name>
        <dbReference type="ChEBI" id="CHEBI:143788"/>
    </ligand>
</feature>
<feature type="binding site" evidence="1">
    <location>
        <begin position="372"/>
        <end position="373"/>
    </location>
    <ligand>
        <name>N(1)-(5-phospho-beta-D-ribosyl)glycinamide</name>
        <dbReference type="ChEBI" id="CHEBI:143788"/>
    </ligand>
</feature>
<proteinExistence type="inferred from homology"/>
<name>PURT_BURP0</name>
<evidence type="ECO:0000255" key="1">
    <source>
        <dbReference type="HAMAP-Rule" id="MF_01643"/>
    </source>
</evidence>
<organism>
    <name type="scientific">Burkholderia pseudomallei (strain 1106a)</name>
    <dbReference type="NCBI Taxonomy" id="357348"/>
    <lineage>
        <taxon>Bacteria</taxon>
        <taxon>Pseudomonadati</taxon>
        <taxon>Pseudomonadota</taxon>
        <taxon>Betaproteobacteria</taxon>
        <taxon>Burkholderiales</taxon>
        <taxon>Burkholderiaceae</taxon>
        <taxon>Burkholderia</taxon>
        <taxon>pseudomallei group</taxon>
    </lineage>
</organism>
<protein>
    <recommendedName>
        <fullName evidence="1">Formate-dependent phosphoribosylglycinamide formyltransferase</fullName>
        <ecNumber evidence="1">6.3.1.21</ecNumber>
    </recommendedName>
    <alternativeName>
        <fullName evidence="1">5'-phosphoribosylglycinamide transformylase 2</fullName>
    </alternativeName>
    <alternativeName>
        <fullName evidence="1">Formate-dependent GAR transformylase</fullName>
    </alternativeName>
    <alternativeName>
        <fullName evidence="1">GAR transformylase 2</fullName>
        <shortName evidence="1">GART 2</shortName>
    </alternativeName>
    <alternativeName>
        <fullName evidence="1">Non-folate glycinamide ribonucleotide transformylase</fullName>
    </alternativeName>
    <alternativeName>
        <fullName evidence="1">Phosphoribosylglycinamide formyltransferase 2</fullName>
    </alternativeName>
</protein>
<sequence length="404" mass="43083">MQIGQRLGTPLSPSATRVMLLGAGELGKEVIIALQRLGVEVIAVDRYPNAPGHQVAHRAHVIDMTDPDALRALVDAERPHLVVPEIEAIATDALAAIEAAGVCEVIPTARATQLTMNREGIRRLAAEELGLPTSPYAFAQSFDEFAAAVARIGFPCVVKPVMSSSGKGQSVVRSEADIEPAWRYAMAGGRVNHGRVIVEGFIRFDYEITQLTVRAIDPASGQTRTSFCAPIGHLQVAGDYVESWQPQPMSAKALERSRDIAHRVTSALGGRGIFGVELFVRGDDVWFSEVSPRPHDTGLVTLASQRQSEFELHARAILGLPVEPALATPAASAVIYGGLDEAGIAFEGVRDALAVPGADLRLFGKPESFAKRRMGVALATGANVDEARERAKRAAAAVRPVSAR</sequence>
<reference key="1">
    <citation type="journal article" date="2010" name="Genome Biol. Evol.">
        <title>Continuing evolution of Burkholderia mallei through genome reduction and large-scale rearrangements.</title>
        <authorList>
            <person name="Losada L."/>
            <person name="Ronning C.M."/>
            <person name="DeShazer D."/>
            <person name="Woods D."/>
            <person name="Fedorova N."/>
            <person name="Kim H.S."/>
            <person name="Shabalina S.A."/>
            <person name="Pearson T.R."/>
            <person name="Brinkac L."/>
            <person name="Tan P."/>
            <person name="Nandi T."/>
            <person name="Crabtree J."/>
            <person name="Badger J."/>
            <person name="Beckstrom-Sternberg S."/>
            <person name="Saqib M."/>
            <person name="Schutzer S.E."/>
            <person name="Keim P."/>
            <person name="Nierman W.C."/>
        </authorList>
    </citation>
    <scope>NUCLEOTIDE SEQUENCE [LARGE SCALE GENOMIC DNA]</scope>
    <source>
        <strain>1106a</strain>
    </source>
</reference>